<name>TILS_SYNJB</name>
<proteinExistence type="inferred from homology"/>
<keyword id="KW-0067">ATP-binding</keyword>
<keyword id="KW-0963">Cytoplasm</keyword>
<keyword id="KW-0436">Ligase</keyword>
<keyword id="KW-0547">Nucleotide-binding</keyword>
<keyword id="KW-1185">Reference proteome</keyword>
<keyword id="KW-0819">tRNA processing</keyword>
<accession>Q2JJ74</accession>
<comment type="function">
    <text evidence="1">Ligates lysine onto the cytidine present at position 34 of the AUA codon-specific tRNA(Ile) that contains the anticodon CAU, in an ATP-dependent manner. Cytidine is converted to lysidine, thus changing the amino acid specificity of the tRNA from methionine to isoleucine.</text>
</comment>
<comment type="catalytic activity">
    <reaction evidence="1">
        <text>cytidine(34) in tRNA(Ile2) + L-lysine + ATP = lysidine(34) in tRNA(Ile2) + AMP + diphosphate + H(+)</text>
        <dbReference type="Rhea" id="RHEA:43744"/>
        <dbReference type="Rhea" id="RHEA-COMP:10625"/>
        <dbReference type="Rhea" id="RHEA-COMP:10670"/>
        <dbReference type="ChEBI" id="CHEBI:15378"/>
        <dbReference type="ChEBI" id="CHEBI:30616"/>
        <dbReference type="ChEBI" id="CHEBI:32551"/>
        <dbReference type="ChEBI" id="CHEBI:33019"/>
        <dbReference type="ChEBI" id="CHEBI:82748"/>
        <dbReference type="ChEBI" id="CHEBI:83665"/>
        <dbReference type="ChEBI" id="CHEBI:456215"/>
        <dbReference type="EC" id="6.3.4.19"/>
    </reaction>
</comment>
<comment type="subcellular location">
    <subcellularLocation>
        <location evidence="1">Cytoplasm</location>
    </subcellularLocation>
</comment>
<comment type="domain">
    <text>The N-terminal region contains the highly conserved SGGXDS motif, predicted to be a P-loop motif involved in ATP binding.</text>
</comment>
<comment type="similarity">
    <text evidence="1">Belongs to the tRNA(Ile)-lysidine synthase family.</text>
</comment>
<sequence>MARLSPLHLRVQCAIRQQQLLHPGQRLLVAFSGGQDSFCLLQILRDLQPRWGWQIFVLHCDHRWSADETECARFLQGWLQQQGLPHAVETADPIRRDEAGARAWRYQQLEKWARTWDCSAVVMGHTASDRAETFLWNLLRGTGAAGLSSLDWQRHLDDRDPTSAQVVRPLLGLYRWETEQFCQQHQLPVWPDRSNQDLAHGRNRLRLEVMPYLKQHFNPQLEAALNRAATLLQAEHELVVAQAAQLWPQVYEPALPGLRRDPLRAAPLALQRQVMFQFLSLVLPHHPTFEQVEAGIQLLKADRGSRSPDYPGGHWLEVKGDHLVCFH</sequence>
<organism>
    <name type="scientific">Synechococcus sp. (strain JA-2-3B'a(2-13))</name>
    <name type="common">Cyanobacteria bacterium Yellowstone B-Prime</name>
    <dbReference type="NCBI Taxonomy" id="321332"/>
    <lineage>
        <taxon>Bacteria</taxon>
        <taxon>Bacillati</taxon>
        <taxon>Cyanobacteriota</taxon>
        <taxon>Cyanophyceae</taxon>
        <taxon>Synechococcales</taxon>
        <taxon>Synechococcaceae</taxon>
        <taxon>Synechococcus</taxon>
    </lineage>
</organism>
<gene>
    <name evidence="1" type="primary">tilS</name>
    <name type="ordered locus">CYB_2368</name>
</gene>
<dbReference type="EC" id="6.3.4.19" evidence="1"/>
<dbReference type="EMBL" id="CP000240">
    <property type="protein sequence ID" value="ABD03307.1"/>
    <property type="molecule type" value="Genomic_DNA"/>
</dbReference>
<dbReference type="RefSeq" id="WP_011433936.1">
    <property type="nucleotide sequence ID" value="NC_007776.1"/>
</dbReference>
<dbReference type="SMR" id="Q2JJ74"/>
<dbReference type="STRING" id="321332.CYB_2368"/>
<dbReference type="KEGG" id="cyb:CYB_2368"/>
<dbReference type="eggNOG" id="COG0037">
    <property type="taxonomic scope" value="Bacteria"/>
</dbReference>
<dbReference type="HOGENOM" id="CLU_018869_0_0_3"/>
<dbReference type="OrthoDB" id="9807403at2"/>
<dbReference type="Proteomes" id="UP000001938">
    <property type="component" value="Chromosome"/>
</dbReference>
<dbReference type="GO" id="GO:0005737">
    <property type="term" value="C:cytoplasm"/>
    <property type="evidence" value="ECO:0007669"/>
    <property type="project" value="UniProtKB-SubCell"/>
</dbReference>
<dbReference type="GO" id="GO:0005524">
    <property type="term" value="F:ATP binding"/>
    <property type="evidence" value="ECO:0007669"/>
    <property type="project" value="UniProtKB-UniRule"/>
</dbReference>
<dbReference type="GO" id="GO:0032267">
    <property type="term" value="F:tRNA(Ile)-lysidine synthase activity"/>
    <property type="evidence" value="ECO:0007669"/>
    <property type="project" value="UniProtKB-EC"/>
</dbReference>
<dbReference type="GO" id="GO:0006400">
    <property type="term" value="P:tRNA modification"/>
    <property type="evidence" value="ECO:0007669"/>
    <property type="project" value="UniProtKB-UniRule"/>
</dbReference>
<dbReference type="CDD" id="cd01992">
    <property type="entry name" value="TilS_N"/>
    <property type="match status" value="1"/>
</dbReference>
<dbReference type="Gene3D" id="1.20.59.20">
    <property type="match status" value="1"/>
</dbReference>
<dbReference type="Gene3D" id="3.40.50.620">
    <property type="entry name" value="HUPs"/>
    <property type="match status" value="1"/>
</dbReference>
<dbReference type="HAMAP" id="MF_01161">
    <property type="entry name" value="tRNA_Ile_lys_synt"/>
    <property type="match status" value="1"/>
</dbReference>
<dbReference type="InterPro" id="IPR014729">
    <property type="entry name" value="Rossmann-like_a/b/a_fold"/>
</dbReference>
<dbReference type="InterPro" id="IPR011063">
    <property type="entry name" value="TilS/TtcA_N"/>
</dbReference>
<dbReference type="InterPro" id="IPR012094">
    <property type="entry name" value="tRNA_Ile_lys_synt"/>
</dbReference>
<dbReference type="InterPro" id="IPR012795">
    <property type="entry name" value="tRNA_Ile_lys_synt_N"/>
</dbReference>
<dbReference type="NCBIfam" id="TIGR02432">
    <property type="entry name" value="lysidine_TilS_N"/>
    <property type="match status" value="1"/>
</dbReference>
<dbReference type="PANTHER" id="PTHR43033">
    <property type="entry name" value="TRNA(ILE)-LYSIDINE SYNTHASE-RELATED"/>
    <property type="match status" value="1"/>
</dbReference>
<dbReference type="PANTHER" id="PTHR43033:SF1">
    <property type="entry name" value="TRNA(ILE)-LYSIDINE SYNTHASE-RELATED"/>
    <property type="match status" value="1"/>
</dbReference>
<dbReference type="Pfam" id="PF01171">
    <property type="entry name" value="ATP_bind_3"/>
    <property type="match status" value="1"/>
</dbReference>
<dbReference type="SUPFAM" id="SSF52402">
    <property type="entry name" value="Adenine nucleotide alpha hydrolases-like"/>
    <property type="match status" value="1"/>
</dbReference>
<dbReference type="SUPFAM" id="SSF82829">
    <property type="entry name" value="MesJ substrate recognition domain-like"/>
    <property type="match status" value="1"/>
</dbReference>
<feature type="chain" id="PRO_1000065631" description="tRNA(Ile)-lysidine synthase">
    <location>
        <begin position="1"/>
        <end position="327"/>
    </location>
</feature>
<feature type="binding site" evidence="1">
    <location>
        <begin position="32"/>
        <end position="37"/>
    </location>
    <ligand>
        <name>ATP</name>
        <dbReference type="ChEBI" id="CHEBI:30616"/>
    </ligand>
</feature>
<reference key="1">
    <citation type="journal article" date="2007" name="ISME J.">
        <title>Population level functional diversity in a microbial community revealed by comparative genomic and metagenomic analyses.</title>
        <authorList>
            <person name="Bhaya D."/>
            <person name="Grossman A.R."/>
            <person name="Steunou A.-S."/>
            <person name="Khuri N."/>
            <person name="Cohan F.M."/>
            <person name="Hamamura N."/>
            <person name="Melendrez M.C."/>
            <person name="Bateson M.M."/>
            <person name="Ward D.M."/>
            <person name="Heidelberg J.F."/>
        </authorList>
    </citation>
    <scope>NUCLEOTIDE SEQUENCE [LARGE SCALE GENOMIC DNA]</scope>
    <source>
        <strain>JA-2-3B'a(2-13)</strain>
    </source>
</reference>
<protein>
    <recommendedName>
        <fullName evidence="1">tRNA(Ile)-lysidine synthase</fullName>
        <ecNumber evidence="1">6.3.4.19</ecNumber>
    </recommendedName>
    <alternativeName>
        <fullName evidence="1">tRNA(Ile)-2-lysyl-cytidine synthase</fullName>
    </alternativeName>
    <alternativeName>
        <fullName evidence="1">tRNA(Ile)-lysidine synthetase</fullName>
    </alternativeName>
</protein>
<evidence type="ECO:0000255" key="1">
    <source>
        <dbReference type="HAMAP-Rule" id="MF_01161"/>
    </source>
</evidence>